<reference key="1">
    <citation type="journal article" date="2003" name="Proc. Natl. Acad. Sci. U.S.A.">
        <title>The complete genome sequence of Mycobacterium bovis.</title>
        <authorList>
            <person name="Garnier T."/>
            <person name="Eiglmeier K."/>
            <person name="Camus J.-C."/>
            <person name="Medina N."/>
            <person name="Mansoor H."/>
            <person name="Pryor M."/>
            <person name="Duthoy S."/>
            <person name="Grondin S."/>
            <person name="Lacroix C."/>
            <person name="Monsempe C."/>
            <person name="Simon S."/>
            <person name="Harris B."/>
            <person name="Atkin R."/>
            <person name="Doggett J."/>
            <person name="Mayes R."/>
            <person name="Keating L."/>
            <person name="Wheeler P.R."/>
            <person name="Parkhill J."/>
            <person name="Barrell B.G."/>
            <person name="Cole S.T."/>
            <person name="Gordon S.V."/>
            <person name="Hewinson R.G."/>
        </authorList>
    </citation>
    <scope>NUCLEOTIDE SEQUENCE [LARGE SCALE GENOMIC DNA]</scope>
    <source>
        <strain>ATCC BAA-935 / AF2122/97</strain>
    </source>
</reference>
<reference key="2">
    <citation type="journal article" date="2017" name="Genome Announc.">
        <title>Updated reference genome sequence and annotation of Mycobacterium bovis AF2122/97.</title>
        <authorList>
            <person name="Malone K.M."/>
            <person name="Farrell D."/>
            <person name="Stuber T.P."/>
            <person name="Schubert O.T."/>
            <person name="Aebersold R."/>
            <person name="Robbe-Austerman S."/>
            <person name="Gordon S.V."/>
        </authorList>
    </citation>
    <scope>NUCLEOTIDE SEQUENCE [LARGE SCALE GENOMIC DNA]</scope>
    <scope>GENOME REANNOTATION</scope>
    <source>
        <strain>ATCC BAA-935 / AF2122/97</strain>
    </source>
</reference>
<name>RSMH_MYCBO</name>
<comment type="function">
    <text evidence="1">Specifically methylates the N4 position of cytidine in position 1402 (C1402) of 16S rRNA.</text>
</comment>
<comment type="catalytic activity">
    <reaction evidence="1">
        <text>cytidine(1402) in 16S rRNA + S-adenosyl-L-methionine = N(4)-methylcytidine(1402) in 16S rRNA + S-adenosyl-L-homocysteine + H(+)</text>
        <dbReference type="Rhea" id="RHEA:42928"/>
        <dbReference type="Rhea" id="RHEA-COMP:10286"/>
        <dbReference type="Rhea" id="RHEA-COMP:10287"/>
        <dbReference type="ChEBI" id="CHEBI:15378"/>
        <dbReference type="ChEBI" id="CHEBI:57856"/>
        <dbReference type="ChEBI" id="CHEBI:59789"/>
        <dbReference type="ChEBI" id="CHEBI:74506"/>
        <dbReference type="ChEBI" id="CHEBI:82748"/>
        <dbReference type="EC" id="2.1.1.199"/>
    </reaction>
</comment>
<comment type="subcellular location">
    <subcellularLocation>
        <location evidence="1">Cytoplasm</location>
    </subcellularLocation>
</comment>
<comment type="similarity">
    <text evidence="1">Belongs to the methyltransferase superfamily. RsmH family.</text>
</comment>
<protein>
    <recommendedName>
        <fullName evidence="1">Ribosomal RNA small subunit methyltransferase H</fullName>
        <ecNumber evidence="1">2.1.1.199</ecNumber>
    </recommendedName>
    <alternativeName>
        <fullName evidence="1">16S rRNA m(4)C1402 methyltransferase</fullName>
    </alternativeName>
    <alternativeName>
        <fullName evidence="1">rRNA (cytosine-N(4)-)-methyltransferase RsmH</fullName>
    </alternativeName>
</protein>
<accession>P65430</accession>
<accession>A0A1R3Y0T5</accession>
<accession>O06212</accession>
<accession>X2BKC0</accession>
<keyword id="KW-0963">Cytoplasm</keyword>
<keyword id="KW-0489">Methyltransferase</keyword>
<keyword id="KW-1185">Reference proteome</keyword>
<keyword id="KW-0698">rRNA processing</keyword>
<keyword id="KW-0949">S-adenosyl-L-methionine</keyword>
<keyword id="KW-0808">Transferase</keyword>
<dbReference type="EC" id="2.1.1.199" evidence="1"/>
<dbReference type="EMBL" id="LT708304">
    <property type="protein sequence ID" value="SIU00797.1"/>
    <property type="molecule type" value="Genomic_DNA"/>
</dbReference>
<dbReference type="RefSeq" id="WP_003411221.1">
    <property type="nucleotide sequence ID" value="NC_002945.4"/>
</dbReference>
<dbReference type="SMR" id="P65430"/>
<dbReference type="KEGG" id="mbo:BQ2027_MB2189C"/>
<dbReference type="Proteomes" id="UP000001419">
    <property type="component" value="Chromosome"/>
</dbReference>
<dbReference type="GO" id="GO:0005737">
    <property type="term" value="C:cytoplasm"/>
    <property type="evidence" value="ECO:0007669"/>
    <property type="project" value="UniProtKB-SubCell"/>
</dbReference>
<dbReference type="GO" id="GO:0071424">
    <property type="term" value="F:rRNA (cytosine-N4-)-methyltransferase activity"/>
    <property type="evidence" value="ECO:0007669"/>
    <property type="project" value="UniProtKB-UniRule"/>
</dbReference>
<dbReference type="GO" id="GO:0070475">
    <property type="term" value="P:rRNA base methylation"/>
    <property type="evidence" value="ECO:0007669"/>
    <property type="project" value="UniProtKB-UniRule"/>
</dbReference>
<dbReference type="FunFam" id="1.10.150.170:FF:000001">
    <property type="entry name" value="Ribosomal RNA small subunit methyltransferase H"/>
    <property type="match status" value="1"/>
</dbReference>
<dbReference type="Gene3D" id="1.10.150.170">
    <property type="entry name" value="Putative methyltransferase TM0872, insert domain"/>
    <property type="match status" value="1"/>
</dbReference>
<dbReference type="Gene3D" id="3.40.50.150">
    <property type="entry name" value="Vaccinia Virus protein VP39"/>
    <property type="match status" value="1"/>
</dbReference>
<dbReference type="HAMAP" id="MF_01007">
    <property type="entry name" value="16SrRNA_methyltr_H"/>
    <property type="match status" value="1"/>
</dbReference>
<dbReference type="InterPro" id="IPR002903">
    <property type="entry name" value="RsmH"/>
</dbReference>
<dbReference type="InterPro" id="IPR023397">
    <property type="entry name" value="SAM-dep_MeTrfase_MraW_recog"/>
</dbReference>
<dbReference type="InterPro" id="IPR029063">
    <property type="entry name" value="SAM-dependent_MTases_sf"/>
</dbReference>
<dbReference type="NCBIfam" id="TIGR00006">
    <property type="entry name" value="16S rRNA (cytosine(1402)-N(4))-methyltransferase RsmH"/>
    <property type="match status" value="1"/>
</dbReference>
<dbReference type="PANTHER" id="PTHR11265:SF0">
    <property type="entry name" value="12S RRNA N4-METHYLCYTIDINE METHYLTRANSFERASE"/>
    <property type="match status" value="1"/>
</dbReference>
<dbReference type="PANTHER" id="PTHR11265">
    <property type="entry name" value="S-ADENOSYL-METHYLTRANSFERASE MRAW"/>
    <property type="match status" value="1"/>
</dbReference>
<dbReference type="Pfam" id="PF01795">
    <property type="entry name" value="Methyltransf_5"/>
    <property type="match status" value="1"/>
</dbReference>
<dbReference type="SUPFAM" id="SSF81799">
    <property type="entry name" value="Putative methyltransferase TM0872, insert domain"/>
    <property type="match status" value="1"/>
</dbReference>
<dbReference type="SUPFAM" id="SSF53335">
    <property type="entry name" value="S-adenosyl-L-methionine-dependent methyltransferases"/>
    <property type="match status" value="1"/>
</dbReference>
<organism>
    <name type="scientific">Mycobacterium bovis (strain ATCC BAA-935 / AF2122/97)</name>
    <dbReference type="NCBI Taxonomy" id="233413"/>
    <lineage>
        <taxon>Bacteria</taxon>
        <taxon>Bacillati</taxon>
        <taxon>Actinomycetota</taxon>
        <taxon>Actinomycetes</taxon>
        <taxon>Mycobacteriales</taxon>
        <taxon>Mycobacteriaceae</taxon>
        <taxon>Mycobacterium</taxon>
        <taxon>Mycobacterium tuberculosis complex</taxon>
    </lineage>
</organism>
<evidence type="ECO:0000255" key="1">
    <source>
        <dbReference type="HAMAP-Rule" id="MF_01007"/>
    </source>
</evidence>
<gene>
    <name evidence="1" type="primary">rsmH</name>
    <name type="synonym">mraW</name>
    <name type="ordered locus">BQ2027_MB2189C</name>
</gene>
<proteinExistence type="inferred from homology"/>
<sequence>MQTRAPWSLPEATLAYFPNARFVSSDRDLGAGAAPGIAASRSTACQTWGGITVADPGSGPTGFGHVPVLAQRCFELLTPALTRYYPDGSQAVLLDATIGAGGHAERFLEGLPGLRLIGLDRDPTALDVARSRLVRFADRLTLVHTRYDCLGAALAESGYAAVGSVDGILFDLGVSSMQLDRAERGFAYATDAPLDMRMDPTTPLTAADIVNTYDEAALADILRRYGEERFARRIAAGIVRRRAKTPFTSTAELVALLYQAIPAPARRVGGHPAKRTFQALRIAVNDELESLRTAVPAALDALAIGGRIAVLAYQSLEDRIVKRVFAEAVASATPAGLPVELPGHEPRFRSLTHGAERASVAEIERNPRSTPVRLRALQRVEHRAQSQQWATEKGDS</sequence>
<feature type="chain" id="PRO_0000108668" description="Ribosomal RNA small subunit methyltransferase H">
    <location>
        <begin position="1"/>
        <end position="396"/>
    </location>
</feature>
<feature type="binding site" evidence="1">
    <location>
        <begin position="101"/>
        <end position="103"/>
    </location>
    <ligand>
        <name>S-adenosyl-L-methionine</name>
        <dbReference type="ChEBI" id="CHEBI:59789"/>
    </ligand>
</feature>
<feature type="binding site" evidence="1">
    <location>
        <position position="120"/>
    </location>
    <ligand>
        <name>S-adenosyl-L-methionine</name>
        <dbReference type="ChEBI" id="CHEBI:59789"/>
    </ligand>
</feature>
<feature type="binding site" evidence="1">
    <location>
        <position position="147"/>
    </location>
    <ligand>
        <name>S-adenosyl-L-methionine</name>
        <dbReference type="ChEBI" id="CHEBI:59789"/>
    </ligand>
</feature>
<feature type="binding site" evidence="1">
    <location>
        <position position="171"/>
    </location>
    <ligand>
        <name>S-adenosyl-L-methionine</name>
        <dbReference type="ChEBI" id="CHEBI:59789"/>
    </ligand>
</feature>
<feature type="binding site" evidence="1">
    <location>
        <position position="178"/>
    </location>
    <ligand>
        <name>S-adenosyl-L-methionine</name>
        <dbReference type="ChEBI" id="CHEBI:59789"/>
    </ligand>
</feature>